<dbReference type="EC" id="2.7.1.19"/>
<dbReference type="EMBL" id="M64624">
    <property type="protein sequence ID" value="AAA26113.1"/>
    <property type="molecule type" value="Genomic_DNA"/>
</dbReference>
<dbReference type="EMBL" id="M28006">
    <property type="protein sequence ID" value="AAA26153.1"/>
    <property type="molecule type" value="Genomic_DNA"/>
</dbReference>
<dbReference type="PIR" id="C40767">
    <property type="entry name" value="KIRFAS"/>
</dbReference>
<dbReference type="PDB" id="1A7J">
    <property type="method" value="X-ray"/>
    <property type="resolution" value="2.50 A"/>
    <property type="chains" value="A=1-290"/>
</dbReference>
<dbReference type="PDBsum" id="1A7J"/>
<dbReference type="SMR" id="P12033"/>
<dbReference type="UniPathway" id="UPA00116"/>
<dbReference type="EvolutionaryTrace" id="P12033"/>
<dbReference type="GO" id="GO:0005524">
    <property type="term" value="F:ATP binding"/>
    <property type="evidence" value="ECO:0007669"/>
    <property type="project" value="UniProtKB-KW"/>
</dbReference>
<dbReference type="GO" id="GO:0008974">
    <property type="term" value="F:phosphoribulokinase activity"/>
    <property type="evidence" value="ECO:0007669"/>
    <property type="project" value="UniProtKB-EC"/>
</dbReference>
<dbReference type="GO" id="GO:0019253">
    <property type="term" value="P:reductive pentose-phosphate cycle"/>
    <property type="evidence" value="ECO:0007669"/>
    <property type="project" value="UniProtKB-UniPathway"/>
</dbReference>
<dbReference type="Gene3D" id="3.40.50.300">
    <property type="entry name" value="P-loop containing nucleotide triphosphate hydrolases"/>
    <property type="match status" value="1"/>
</dbReference>
<dbReference type="InterPro" id="IPR027417">
    <property type="entry name" value="P-loop_NTPase"/>
</dbReference>
<dbReference type="InterPro" id="IPR006082">
    <property type="entry name" value="PRK"/>
</dbReference>
<dbReference type="InterPro" id="IPR006083">
    <property type="entry name" value="PRK/URK"/>
</dbReference>
<dbReference type="NCBIfam" id="NF011997">
    <property type="entry name" value="PRK15453.1"/>
    <property type="match status" value="1"/>
</dbReference>
<dbReference type="Pfam" id="PF00485">
    <property type="entry name" value="PRK"/>
    <property type="match status" value="1"/>
</dbReference>
<dbReference type="PRINTS" id="PR00478">
    <property type="entry name" value="PHRIBLKINASE"/>
</dbReference>
<dbReference type="SUPFAM" id="SSF52540">
    <property type="entry name" value="P-loop containing nucleoside triphosphate hydrolases"/>
    <property type="match status" value="1"/>
</dbReference>
<dbReference type="PROSITE" id="PS00567">
    <property type="entry name" value="PHOSPHORIBULOKINASE"/>
    <property type="match status" value="1"/>
</dbReference>
<comment type="catalytic activity">
    <reaction>
        <text>D-ribulose 5-phosphate + ATP = D-ribulose 1,5-bisphosphate + ADP + H(+)</text>
        <dbReference type="Rhea" id="RHEA:19365"/>
        <dbReference type="ChEBI" id="CHEBI:15378"/>
        <dbReference type="ChEBI" id="CHEBI:30616"/>
        <dbReference type="ChEBI" id="CHEBI:57870"/>
        <dbReference type="ChEBI" id="CHEBI:58121"/>
        <dbReference type="ChEBI" id="CHEBI:456216"/>
        <dbReference type="EC" id="2.7.1.19"/>
    </reaction>
</comment>
<comment type="activity regulation">
    <text>Activated by NADH and inhibited by phosphoenolpyruvate.</text>
</comment>
<comment type="pathway">
    <text>Carbohydrate biosynthesis; Calvin cycle.</text>
</comment>
<comment type="subunit">
    <text>Homooctamer.</text>
</comment>
<comment type="miscellaneous">
    <text>Is not found in cells cultured chemoheterotrophically and only low levels of activities are found in those grown photoheterotrophically on oxidized organic acids.</text>
</comment>
<comment type="similarity">
    <text evidence="2">Belongs to the phosphoribulokinase family.</text>
</comment>
<name>KPPR1_CERSP</name>
<protein>
    <recommendedName>
        <fullName>Phosphoribulokinase 1</fullName>
        <shortName>PRK I</shortName>
        <shortName>PRKase 1</shortName>
        <ecNumber>2.7.1.19</ecNumber>
    </recommendedName>
    <alternativeName>
        <fullName>Phosphopentokinase 1</fullName>
    </alternativeName>
</protein>
<evidence type="ECO:0000255" key="1"/>
<evidence type="ECO:0000305" key="2"/>
<evidence type="ECO:0007829" key="3">
    <source>
        <dbReference type="PDB" id="1A7J"/>
    </source>
</evidence>
<feature type="chain" id="PRO_0000201957" description="Phosphoribulokinase 1">
    <location>
        <begin position="1"/>
        <end position="290"/>
    </location>
</feature>
<feature type="binding site" evidence="1">
    <location>
        <begin position="12"/>
        <end position="20"/>
    </location>
    <ligand>
        <name>ATP</name>
        <dbReference type="ChEBI" id="CHEBI:30616"/>
    </ligand>
</feature>
<feature type="strand" evidence="3">
    <location>
        <begin position="7"/>
        <end position="12"/>
    </location>
</feature>
<feature type="helix" evidence="3">
    <location>
        <begin position="21"/>
        <end position="32"/>
    </location>
</feature>
<feature type="strand" evidence="3">
    <location>
        <begin position="36"/>
        <end position="40"/>
    </location>
</feature>
<feature type="helix" evidence="3">
    <location>
        <begin position="41"/>
        <end position="44"/>
    </location>
</feature>
<feature type="helix" evidence="3">
    <location>
        <begin position="49"/>
        <end position="62"/>
    </location>
</feature>
<feature type="helix" evidence="3">
    <location>
        <begin position="72"/>
        <end position="74"/>
    </location>
</feature>
<feature type="helix" evidence="3">
    <location>
        <begin position="77"/>
        <end position="90"/>
    </location>
</feature>
<feature type="strand" evidence="3">
    <location>
        <begin position="126"/>
        <end position="133"/>
    </location>
</feature>
<feature type="helix" evidence="3">
    <location>
        <begin position="145"/>
        <end position="147"/>
    </location>
</feature>
<feature type="strand" evidence="3">
    <location>
        <begin position="149"/>
        <end position="156"/>
    </location>
</feature>
<feature type="helix" evidence="3">
    <location>
        <begin position="158"/>
        <end position="168"/>
    </location>
</feature>
<feature type="strand" evidence="3">
    <location>
        <begin position="170"/>
        <end position="172"/>
    </location>
</feature>
<feature type="helix" evidence="3">
    <location>
        <begin position="180"/>
        <end position="194"/>
    </location>
</feature>
<feature type="helix" evidence="3">
    <location>
        <begin position="196"/>
        <end position="200"/>
    </location>
</feature>
<feature type="strand" evidence="3">
    <location>
        <begin position="203"/>
        <end position="212"/>
    </location>
</feature>
<feature type="helix" evidence="3">
    <location>
        <begin position="217"/>
        <end position="219"/>
    </location>
</feature>
<feature type="helix" evidence="3">
    <location>
        <begin position="226"/>
        <end position="228"/>
    </location>
</feature>
<feature type="strand" evidence="3">
    <location>
        <begin position="229"/>
        <end position="237"/>
    </location>
</feature>
<feature type="helix" evidence="3">
    <location>
        <begin position="243"/>
        <end position="249"/>
    </location>
</feature>
<feature type="strand" evidence="3">
    <location>
        <begin position="254"/>
        <end position="257"/>
    </location>
</feature>
<feature type="strand" evidence="3">
    <location>
        <begin position="260"/>
        <end position="264"/>
    </location>
</feature>
<feature type="helix" evidence="3">
    <location>
        <begin position="265"/>
        <end position="267"/>
    </location>
</feature>
<feature type="helix" evidence="3">
    <location>
        <begin position="268"/>
        <end position="284"/>
    </location>
</feature>
<feature type="turn" evidence="3">
    <location>
        <begin position="285"/>
        <end position="288"/>
    </location>
</feature>
<proteinExistence type="evidence at protein level"/>
<organism>
    <name type="scientific">Cereibacter sphaeroides</name>
    <name type="common">Rhodobacter sphaeroides</name>
    <dbReference type="NCBI Taxonomy" id="1063"/>
    <lineage>
        <taxon>Bacteria</taxon>
        <taxon>Pseudomonadati</taxon>
        <taxon>Pseudomonadota</taxon>
        <taxon>Alphaproteobacteria</taxon>
        <taxon>Rhodobacterales</taxon>
        <taxon>Paracoccaceae</taxon>
        <taxon>Cereibacter</taxon>
    </lineage>
</organism>
<gene>
    <name type="primary">prkA</name>
</gene>
<keyword id="KW-0002">3D-structure</keyword>
<keyword id="KW-0067">ATP-binding</keyword>
<keyword id="KW-0113">Calvin cycle</keyword>
<keyword id="KW-0418">Kinase</keyword>
<keyword id="KW-0547">Nucleotide-binding</keyword>
<keyword id="KW-0602">Photosynthesis</keyword>
<keyword id="KW-0808">Transferase</keyword>
<sequence>MSKKHPIISVTGSSGAGTSTVKHTFDQIFRREGVKAVSIEGDAFHRFNRADMKAELDRRYAAGDATFSHFSYEANELKELERVFREYGETGQGRTRTYVHDDAEAARTGVAPGNFTDWRDFDSDSHLLFYEGLHGAVVNSEVNIAGLADLKIGVVPVINLEWIQKIHRDRATRGYTTEAVTDVILRRMHAYVHCIVPQFSQTDINFQRVPVVDTSNPFIARWIPTADESVVVIRFRNPRGIDFPYLTSMIHGSWMSRANSIVVPGNKLDLAMQLILTPLIDRVVRESKVA</sequence>
<accession>P12033</accession>
<reference key="1">
    <citation type="journal article" date="1991" name="J. Biol. Chem.">
        <title>Nucleotide sequence, transcriptional analysis, and expression of genes encoded within the form I CO2 fixation operon of Rhodobacter sphaeroides.</title>
        <authorList>
            <person name="Gibson J.L."/>
            <person name="Falcone D.L."/>
            <person name="Tabita F.R."/>
        </authorList>
    </citation>
    <scope>NUCLEOTIDE SEQUENCE [GENOMIC DNA]</scope>
</reference>
<reference key="2">
    <citation type="journal article" date="1987" name="J. Bacteriol.">
        <title>Cloning of the gene for phosphoribulokinase activity from Rhodobacter sphaeroides and its expression in Escherichia coli.</title>
        <authorList>
            <person name="Hallenbeck P.L."/>
            <person name="Kaplan S."/>
        </authorList>
    </citation>
    <scope>NUCLEOTIDE SEQUENCE [GENOMIC DNA] OF 1-28</scope>
</reference>
<reference key="3">
    <citation type="journal article" date="1998" name="Biochemistry">
        <title>The crystal structure of phosphoribulokinase from Rhodobacter sphaeroides reveals a fold similar to that of adenylate kinase.</title>
        <authorList>
            <person name="Harrison D.H."/>
            <person name="Runquist J.A."/>
            <person name="Holub A."/>
            <person name="Miziorko H.M."/>
        </authorList>
    </citation>
    <scope>X-RAY CRYSTALLOGRAPHY (2.5 ANGSTROMS)</scope>
</reference>